<comment type="function">
    <text evidence="1">GDP-Man:Man(3)GlcNAc(2)-PP-Dol alpha-1,2-mannosyltransferase that operates in the biosynthetic pathway of dolichol-linked oligosaccharides, the glycan precursors employed in protein asparagine (N)-glycosylation. The assembly of dolichol-linked oligosaccharides begins on the cytosolic side of the endoplasmic reticulum membrane and finishes in its lumen. The sequential addition of sugars to dolichol pyrophosphate produces dolichol-linked oligosaccharides containing fourteen sugars, including two GlcNAcs, nine mannoses and three glucoses. Once assembled, the oligosaccharide is transferred from the lipid to nascent proteins by oligosaccharyltransferases. Catalyzes, on the cytoplasmic face of the endoplasmic reticulum, the addition of the fourth and fifth mannose residues to the dolichol-linked oligosaccharide chain, to produce Man(5)GlcNAc(2)-PP-dolichol core oligosaccharide.</text>
</comment>
<comment type="catalytic activity">
    <reaction evidence="1">
        <text>an alpha-D-Man-(1-&gt;3)-[alpha-D-Man-(1-&gt;6)]-beta-D-Man-(1-&gt;4)-beta-D-GlcNAc-(1-&gt;4)-alpha-D-GlcNAc-diphospho-di-trans,poly-cis-dolichol + 2 GDP-alpha-D-mannose = an alpha-D-Man-(1-&gt;2)-alpha-D-Man-(1-&gt;2)-alpha-D-Man-(1-&gt;3)-[alpha-D-Man-(1-&gt;6)]-beta-D-Man-(1-&gt;4)-beta-D-GlcNAc-(1-&gt;4)-alpha-D-GlcNAc-diphospho-di-trans,poly-cis-dolichol + 2 GDP + 2 H(+)</text>
        <dbReference type="Rhea" id="RHEA:29523"/>
        <dbReference type="Rhea" id="RHEA-COMP:19515"/>
        <dbReference type="Rhea" id="RHEA-COMP:19516"/>
        <dbReference type="ChEBI" id="CHEBI:15378"/>
        <dbReference type="ChEBI" id="CHEBI:57527"/>
        <dbReference type="ChEBI" id="CHEBI:58189"/>
        <dbReference type="ChEBI" id="CHEBI:132511"/>
        <dbReference type="ChEBI" id="CHEBI:132515"/>
        <dbReference type="EC" id="2.4.1.131"/>
    </reaction>
    <physiologicalReaction direction="left-to-right" evidence="1">
        <dbReference type="Rhea" id="RHEA:29524"/>
    </physiologicalReaction>
</comment>
<comment type="pathway">
    <text evidence="1">Protein modification; protein glycosylation.</text>
</comment>
<comment type="subcellular location">
    <subcellularLocation>
        <location evidence="1">Endoplasmic reticulum membrane</location>
        <topology evidence="1">Single-pass membrane protein</topology>
    </subcellularLocation>
</comment>
<comment type="similarity">
    <text evidence="3">Belongs to the glycosyltransferase group 1 family.</text>
</comment>
<gene>
    <name type="primary">alg11</name>
    <name type="ORF">DDB_G0292118</name>
</gene>
<name>ALG11_DICDI</name>
<dbReference type="EC" id="2.4.1.131" evidence="1"/>
<dbReference type="EMBL" id="AAFI02000187">
    <property type="protein sequence ID" value="EAL61415.1"/>
    <property type="molecule type" value="Genomic_DNA"/>
</dbReference>
<dbReference type="RefSeq" id="XP_629843.1">
    <property type="nucleotide sequence ID" value="XM_629841.1"/>
</dbReference>
<dbReference type="SMR" id="Q54DM9"/>
<dbReference type="FunCoup" id="Q54DM9">
    <property type="interactions" value="502"/>
</dbReference>
<dbReference type="STRING" id="44689.Q54DM9"/>
<dbReference type="GlyCosmos" id="Q54DM9">
    <property type="glycosylation" value="7 sites, No reported glycans"/>
</dbReference>
<dbReference type="PaxDb" id="44689-DDB0231366"/>
<dbReference type="EnsemblProtists" id="EAL61415">
    <property type="protein sequence ID" value="EAL61415"/>
    <property type="gene ID" value="DDB_G0292118"/>
</dbReference>
<dbReference type="GeneID" id="8628523"/>
<dbReference type="KEGG" id="ddi:DDB_G0292118"/>
<dbReference type="dictyBase" id="DDB_G0292118">
    <property type="gene designation" value="alg11"/>
</dbReference>
<dbReference type="VEuPathDB" id="AmoebaDB:DDB_G0292118"/>
<dbReference type="eggNOG" id="KOG1387">
    <property type="taxonomic scope" value="Eukaryota"/>
</dbReference>
<dbReference type="HOGENOM" id="CLU_017896_2_0_1"/>
<dbReference type="InParanoid" id="Q54DM9"/>
<dbReference type="OMA" id="ARLYGWV"/>
<dbReference type="PhylomeDB" id="Q54DM9"/>
<dbReference type="UniPathway" id="UPA00378"/>
<dbReference type="PRO" id="PR:Q54DM9"/>
<dbReference type="Proteomes" id="UP000002195">
    <property type="component" value="Chromosome 6"/>
</dbReference>
<dbReference type="GO" id="GO:0005789">
    <property type="term" value="C:endoplasmic reticulum membrane"/>
    <property type="evidence" value="ECO:0000318"/>
    <property type="project" value="GO_Central"/>
</dbReference>
<dbReference type="GO" id="GO:0005811">
    <property type="term" value="C:lipid droplet"/>
    <property type="evidence" value="ECO:0007005"/>
    <property type="project" value="dictyBase"/>
</dbReference>
<dbReference type="GO" id="GO:0000026">
    <property type="term" value="F:alpha-1,2-mannosyltransferase activity"/>
    <property type="evidence" value="ECO:0000250"/>
    <property type="project" value="dictyBase"/>
</dbReference>
<dbReference type="GO" id="GO:0004377">
    <property type="term" value="F:GDP-Man:Man3GlcNAc2-PP-Dol alpha-1,2-mannosyltransferase activity"/>
    <property type="evidence" value="ECO:0000318"/>
    <property type="project" value="GO_Central"/>
</dbReference>
<dbReference type="GO" id="GO:0006488">
    <property type="term" value="P:dolichol-linked oligosaccharide biosynthetic process"/>
    <property type="evidence" value="ECO:0000318"/>
    <property type="project" value="GO_Central"/>
</dbReference>
<dbReference type="GO" id="GO:0006486">
    <property type="term" value="P:protein glycosylation"/>
    <property type="evidence" value="ECO:0000250"/>
    <property type="project" value="dictyBase"/>
</dbReference>
<dbReference type="CDD" id="cd03806">
    <property type="entry name" value="GT4_ALG11-like"/>
    <property type="match status" value="1"/>
</dbReference>
<dbReference type="FunFam" id="3.40.50.2000:FF:000744">
    <property type="entry name" value="GDP-Man:Man(3)GlcNAc(2)-PP-Dol alpha-1,2-mannosyltransferase"/>
    <property type="match status" value="1"/>
</dbReference>
<dbReference type="Gene3D" id="3.40.50.2000">
    <property type="entry name" value="Glycogen Phosphorylase B"/>
    <property type="match status" value="1"/>
</dbReference>
<dbReference type="InterPro" id="IPR038013">
    <property type="entry name" value="ALG11"/>
</dbReference>
<dbReference type="InterPro" id="IPR031814">
    <property type="entry name" value="ALG11_N"/>
</dbReference>
<dbReference type="InterPro" id="IPR001296">
    <property type="entry name" value="Glyco_trans_1"/>
</dbReference>
<dbReference type="PANTHER" id="PTHR45919">
    <property type="entry name" value="GDP-MAN:MAN(3)GLCNAC(2)-PP-DOL ALPHA-1,2-MANNOSYLTRANSFERASE"/>
    <property type="match status" value="1"/>
</dbReference>
<dbReference type="PANTHER" id="PTHR45919:SF1">
    <property type="entry name" value="GDP-MAN:MAN(3)GLCNAC(2)-PP-DOL ALPHA-1,2-MANNOSYLTRANSFERASE"/>
    <property type="match status" value="1"/>
</dbReference>
<dbReference type="Pfam" id="PF15924">
    <property type="entry name" value="ALG11_N"/>
    <property type="match status" value="1"/>
</dbReference>
<dbReference type="Pfam" id="PF00534">
    <property type="entry name" value="Glycos_transf_1"/>
    <property type="match status" value="1"/>
</dbReference>
<dbReference type="SUPFAM" id="SSF53756">
    <property type="entry name" value="UDP-Glycosyltransferase/glycogen phosphorylase"/>
    <property type="match status" value="1"/>
</dbReference>
<proteinExistence type="inferred from homology"/>
<feature type="chain" id="PRO_0000327540" description="GDP-Man:Man(3)GlcNAc(2)-PP-Dol alpha-1,2-mannosyltransferase">
    <location>
        <begin position="1"/>
        <end position="505"/>
    </location>
</feature>
<feature type="topological domain" description="Lumenal" evidence="1">
    <location>
        <begin position="1"/>
        <end position="3"/>
    </location>
</feature>
<feature type="transmembrane region" description="Helical" evidence="2">
    <location>
        <begin position="4"/>
        <end position="24"/>
    </location>
</feature>
<feature type="topological domain" description="Cytoplasmic" evidence="1">
    <location>
        <begin position="25"/>
        <end position="145"/>
    </location>
</feature>
<feature type="intramembrane region" description="Helical" evidence="2">
    <location>
        <begin position="146"/>
        <end position="166"/>
    </location>
</feature>
<feature type="topological domain" description="Cytoplasmic" evidence="1">
    <location>
        <begin position="167"/>
        <end position="402"/>
    </location>
</feature>
<feature type="intramembrane region" description="Helical" evidence="2">
    <location>
        <begin position="403"/>
        <end position="423"/>
    </location>
</feature>
<feature type="topological domain" description="Cytoplasmic" evidence="1">
    <location>
        <begin position="424"/>
        <end position="505"/>
    </location>
</feature>
<reference key="1">
    <citation type="journal article" date="2005" name="Nature">
        <title>The genome of the social amoeba Dictyostelium discoideum.</title>
        <authorList>
            <person name="Eichinger L."/>
            <person name="Pachebat J.A."/>
            <person name="Gloeckner G."/>
            <person name="Rajandream M.A."/>
            <person name="Sucgang R."/>
            <person name="Berriman M."/>
            <person name="Song J."/>
            <person name="Olsen R."/>
            <person name="Szafranski K."/>
            <person name="Xu Q."/>
            <person name="Tunggal B."/>
            <person name="Kummerfeld S."/>
            <person name="Madera M."/>
            <person name="Konfortov B.A."/>
            <person name="Rivero F."/>
            <person name="Bankier A.T."/>
            <person name="Lehmann R."/>
            <person name="Hamlin N."/>
            <person name="Davies R."/>
            <person name="Gaudet P."/>
            <person name="Fey P."/>
            <person name="Pilcher K."/>
            <person name="Chen G."/>
            <person name="Saunders D."/>
            <person name="Sodergren E.J."/>
            <person name="Davis P."/>
            <person name="Kerhornou A."/>
            <person name="Nie X."/>
            <person name="Hall N."/>
            <person name="Anjard C."/>
            <person name="Hemphill L."/>
            <person name="Bason N."/>
            <person name="Farbrother P."/>
            <person name="Desany B."/>
            <person name="Just E."/>
            <person name="Morio T."/>
            <person name="Rost R."/>
            <person name="Churcher C.M."/>
            <person name="Cooper J."/>
            <person name="Haydock S."/>
            <person name="van Driessche N."/>
            <person name="Cronin A."/>
            <person name="Goodhead I."/>
            <person name="Muzny D.M."/>
            <person name="Mourier T."/>
            <person name="Pain A."/>
            <person name="Lu M."/>
            <person name="Harper D."/>
            <person name="Lindsay R."/>
            <person name="Hauser H."/>
            <person name="James K.D."/>
            <person name="Quiles M."/>
            <person name="Madan Babu M."/>
            <person name="Saito T."/>
            <person name="Buchrieser C."/>
            <person name="Wardroper A."/>
            <person name="Felder M."/>
            <person name="Thangavelu M."/>
            <person name="Johnson D."/>
            <person name="Knights A."/>
            <person name="Loulseged H."/>
            <person name="Mungall K.L."/>
            <person name="Oliver K."/>
            <person name="Price C."/>
            <person name="Quail M.A."/>
            <person name="Urushihara H."/>
            <person name="Hernandez J."/>
            <person name="Rabbinowitsch E."/>
            <person name="Steffen D."/>
            <person name="Sanders M."/>
            <person name="Ma J."/>
            <person name="Kohara Y."/>
            <person name="Sharp S."/>
            <person name="Simmonds M.N."/>
            <person name="Spiegler S."/>
            <person name="Tivey A."/>
            <person name="Sugano S."/>
            <person name="White B."/>
            <person name="Walker D."/>
            <person name="Woodward J.R."/>
            <person name="Winckler T."/>
            <person name="Tanaka Y."/>
            <person name="Shaulsky G."/>
            <person name="Schleicher M."/>
            <person name="Weinstock G.M."/>
            <person name="Rosenthal A."/>
            <person name="Cox E.C."/>
            <person name="Chisholm R.L."/>
            <person name="Gibbs R.A."/>
            <person name="Loomis W.F."/>
            <person name="Platzer M."/>
            <person name="Kay R.R."/>
            <person name="Williams J.G."/>
            <person name="Dear P.H."/>
            <person name="Noegel A.A."/>
            <person name="Barrell B.G."/>
            <person name="Kuspa A."/>
        </authorList>
    </citation>
    <scope>NUCLEOTIDE SEQUENCE [LARGE SCALE GENOMIC DNA]</scope>
    <source>
        <strain>AX4</strain>
    </source>
</reference>
<keyword id="KW-0256">Endoplasmic reticulum</keyword>
<keyword id="KW-0328">Glycosyltransferase</keyword>
<keyword id="KW-0472">Membrane</keyword>
<keyword id="KW-1185">Reference proteome</keyword>
<keyword id="KW-0808">Transferase</keyword>
<keyword id="KW-0812">Transmembrane</keyword>
<keyword id="KW-1133">Transmembrane helix</keyword>
<sequence length="505" mass="57519">MDELIMMVFVLFTIVLLLTVSMTLAALISTIVVLVVPLIICIIALLIALRIKYGSKKDLSEVSIGFFHPYCTAGGGGERVLWCAIKSIQEEYPYVRCVVYTGDKESDDEIFNKVKKTFDIELGRDNLEFIRLKKRKWVEASTYPRFTLIGQSLGSMILGWEALTKFVPTIFLDSMGYAFTFPIFSLIGGSTVACYVHYPTISSDMISSVKSSSYSFNNDVSISSNKFKTISKLIYYNIFSKIYQIVGSFSKLVMVNGTWTGNHIRDIWKKQFGYDLFIVYPPVDVKGRKQLKLGWMDGTRKNMILSIAQFRPEKNHQLQLRTLAHLLEKYPSHREQPLNTKLVLVGGVRDQADRDRVEQLRNLSKELNIEDHVEFQIGISSDQLNQLLSEASVGIHTMYNEHFGIGVVELMAAGVIPVANNSAGPKEDIVRHEDTGFLASTIQEYAEYIHEILAYREKYVEMQKKARDSTDRFSESNFSNQFLKYIKPLINQSLRNNNSSSKKRN</sequence>
<evidence type="ECO:0000250" key="1">
    <source>
        <dbReference type="UniProtKB" id="P53954"/>
    </source>
</evidence>
<evidence type="ECO:0000255" key="2"/>
<evidence type="ECO:0000305" key="3"/>
<protein>
    <recommendedName>
        <fullName evidence="1">GDP-Man:Man(3)GlcNAc(2)-PP-Dol alpha-1,2-mannosyltransferase</fullName>
        <ecNumber evidence="1">2.4.1.131</ecNumber>
    </recommendedName>
    <alternativeName>
        <fullName>Asparagine-linked glycosylation protein 11 homolog</fullName>
    </alternativeName>
    <alternativeName>
        <fullName>Glycolipid 2-alpha-mannosyltransferase</fullName>
    </alternativeName>
</protein>
<accession>Q54DM9</accession>
<organism>
    <name type="scientific">Dictyostelium discoideum</name>
    <name type="common">Social amoeba</name>
    <dbReference type="NCBI Taxonomy" id="44689"/>
    <lineage>
        <taxon>Eukaryota</taxon>
        <taxon>Amoebozoa</taxon>
        <taxon>Evosea</taxon>
        <taxon>Eumycetozoa</taxon>
        <taxon>Dictyostelia</taxon>
        <taxon>Dictyosteliales</taxon>
        <taxon>Dictyosteliaceae</taxon>
        <taxon>Dictyostelium</taxon>
    </lineage>
</organism>